<proteinExistence type="inferred from homology"/>
<organism>
    <name type="scientific">Mycobacterium marinum (strain ATCC BAA-535 / M)</name>
    <dbReference type="NCBI Taxonomy" id="216594"/>
    <lineage>
        <taxon>Bacteria</taxon>
        <taxon>Bacillati</taxon>
        <taxon>Actinomycetota</taxon>
        <taxon>Actinomycetes</taxon>
        <taxon>Mycobacteriales</taxon>
        <taxon>Mycobacteriaceae</taxon>
        <taxon>Mycobacterium</taxon>
        <taxon>Mycobacterium ulcerans group</taxon>
    </lineage>
</organism>
<evidence type="ECO:0000255" key="1">
    <source>
        <dbReference type="HAMAP-Rule" id="MF_01227"/>
    </source>
</evidence>
<evidence type="ECO:0000256" key="2">
    <source>
        <dbReference type="SAM" id="MobiDB-lite"/>
    </source>
</evidence>
<gene>
    <name evidence="1" type="primary">pyrG</name>
    <name type="ordered locus">MMAR_2504</name>
</gene>
<sequence>MRRHPQTATKHLFVSGGVASSLGKGLTASSLGQLLTARGLRVTMQKLDPYLNVDPGTMNPFQHGEVFVTEDGAETDLDVGHYERFLDRDLSGSANVTTGQVYSTVIAKERRGEYLGDTVQVIPHITDEIKRRIMAMAEPNADGRRPDVVITEIGGTVGDIESQPFLEAARQVRHDLGRENVFFLHVSLVPYLAPSGELKTKPTQHSVAALRSIGITPDALILRCDRDVPEALKNKIALMCDVDIDGIISTPDAPSIYDIPKVLHREELDAFVVRRLNLPFRDVDWTEWDDLLRRVHEPKETVRIALVGKYVELSDAYLSVIEAIRAGGFKHRAKVEISWVGSDDCQTDGGVASALGDVHGVLIPGGFGIRGIEGKISAISYARSRGLPVFGLCLGLQCIVIEAARSVGLTEANSAEFEPGTPDPVISTMADQEHIVSGQADLGGTMRLGAYPAVLESGSIVAEAYQSTKVSERHRHRYEVNNAYRDRIAESGLRFSGTSPDGHLVEFVEYPPEQHPFVVGTQAHPELKSRPTRPHPLFAAFVKAAIDYKEGELLPVEMPERVSNGAERRDQVGQSIPEPANRG</sequence>
<accession>B2HR69</accession>
<protein>
    <recommendedName>
        <fullName evidence="1">CTP synthase</fullName>
        <ecNumber evidence="1">6.3.4.2</ecNumber>
    </recommendedName>
    <alternativeName>
        <fullName evidence="1">Cytidine 5'-triphosphate synthase</fullName>
    </alternativeName>
    <alternativeName>
        <fullName evidence="1">Cytidine triphosphate synthetase</fullName>
        <shortName evidence="1">CTP synthetase</shortName>
        <shortName evidence="1">CTPS</shortName>
    </alternativeName>
    <alternativeName>
        <fullName evidence="1">UTP--ammonia ligase</fullName>
    </alternativeName>
</protein>
<reference key="1">
    <citation type="journal article" date="2008" name="Genome Res.">
        <title>Insights from the complete genome sequence of Mycobacterium marinum on the evolution of Mycobacterium tuberculosis.</title>
        <authorList>
            <person name="Stinear T.P."/>
            <person name="Seemann T."/>
            <person name="Harrison P.F."/>
            <person name="Jenkin G.A."/>
            <person name="Davies J.K."/>
            <person name="Johnson P.D."/>
            <person name="Abdellah Z."/>
            <person name="Arrowsmith C."/>
            <person name="Chillingworth T."/>
            <person name="Churcher C."/>
            <person name="Clarke K."/>
            <person name="Cronin A."/>
            <person name="Davis P."/>
            <person name="Goodhead I."/>
            <person name="Holroyd N."/>
            <person name="Jagels K."/>
            <person name="Lord A."/>
            <person name="Moule S."/>
            <person name="Mungall K."/>
            <person name="Norbertczak H."/>
            <person name="Quail M.A."/>
            <person name="Rabbinowitsch E."/>
            <person name="Walker D."/>
            <person name="White B."/>
            <person name="Whitehead S."/>
            <person name="Small P.L."/>
            <person name="Brosch R."/>
            <person name="Ramakrishnan L."/>
            <person name="Fischbach M.A."/>
            <person name="Parkhill J."/>
            <person name="Cole S.T."/>
        </authorList>
    </citation>
    <scope>NUCLEOTIDE SEQUENCE [LARGE SCALE GENOMIC DNA]</scope>
    <source>
        <strain>ATCC BAA-535 / M</strain>
    </source>
</reference>
<feature type="chain" id="PRO_1000139495" description="CTP synthase">
    <location>
        <begin position="1"/>
        <end position="583"/>
    </location>
</feature>
<feature type="domain" description="Glutamine amidotransferase type-1" evidence="1">
    <location>
        <begin position="303"/>
        <end position="551"/>
    </location>
</feature>
<feature type="region of interest" description="Amidoligase domain" evidence="1">
    <location>
        <begin position="1"/>
        <end position="278"/>
    </location>
</feature>
<feature type="region of interest" description="Disordered" evidence="2">
    <location>
        <begin position="559"/>
        <end position="583"/>
    </location>
</feature>
<feature type="active site" description="Nucleophile; for glutamine hydrolysis" evidence="1">
    <location>
        <position position="393"/>
    </location>
</feature>
<feature type="active site" evidence="1">
    <location>
        <position position="524"/>
    </location>
</feature>
<feature type="active site" evidence="1">
    <location>
        <position position="526"/>
    </location>
</feature>
<feature type="binding site" evidence="1">
    <location>
        <position position="20"/>
    </location>
    <ligand>
        <name>CTP</name>
        <dbReference type="ChEBI" id="CHEBI:37563"/>
        <note>allosteric inhibitor</note>
    </ligand>
</feature>
<feature type="binding site" evidence="1">
    <location>
        <position position="20"/>
    </location>
    <ligand>
        <name>UTP</name>
        <dbReference type="ChEBI" id="CHEBI:46398"/>
    </ligand>
</feature>
<feature type="binding site" evidence="1">
    <location>
        <begin position="21"/>
        <end position="26"/>
    </location>
    <ligand>
        <name>ATP</name>
        <dbReference type="ChEBI" id="CHEBI:30616"/>
    </ligand>
</feature>
<feature type="binding site" evidence="1">
    <location>
        <position position="78"/>
    </location>
    <ligand>
        <name>ATP</name>
        <dbReference type="ChEBI" id="CHEBI:30616"/>
    </ligand>
</feature>
<feature type="binding site" evidence="1">
    <location>
        <position position="78"/>
    </location>
    <ligand>
        <name>Mg(2+)</name>
        <dbReference type="ChEBI" id="CHEBI:18420"/>
    </ligand>
</feature>
<feature type="binding site" evidence="1">
    <location>
        <position position="152"/>
    </location>
    <ligand>
        <name>Mg(2+)</name>
        <dbReference type="ChEBI" id="CHEBI:18420"/>
    </ligand>
</feature>
<feature type="binding site" evidence="1">
    <location>
        <begin position="159"/>
        <end position="161"/>
    </location>
    <ligand>
        <name>CTP</name>
        <dbReference type="ChEBI" id="CHEBI:37563"/>
        <note>allosteric inhibitor</note>
    </ligand>
</feature>
<feature type="binding site" evidence="1">
    <location>
        <begin position="199"/>
        <end position="204"/>
    </location>
    <ligand>
        <name>CTP</name>
        <dbReference type="ChEBI" id="CHEBI:37563"/>
        <note>allosteric inhibitor</note>
    </ligand>
</feature>
<feature type="binding site" evidence="1">
    <location>
        <begin position="199"/>
        <end position="204"/>
    </location>
    <ligand>
        <name>UTP</name>
        <dbReference type="ChEBI" id="CHEBI:46398"/>
    </ligand>
</feature>
<feature type="binding site" evidence="1">
    <location>
        <position position="235"/>
    </location>
    <ligand>
        <name>CTP</name>
        <dbReference type="ChEBI" id="CHEBI:37563"/>
        <note>allosteric inhibitor</note>
    </ligand>
</feature>
<feature type="binding site" evidence="1">
    <location>
        <position position="235"/>
    </location>
    <ligand>
        <name>UTP</name>
        <dbReference type="ChEBI" id="CHEBI:46398"/>
    </ligand>
</feature>
<feature type="binding site" evidence="1">
    <location>
        <position position="366"/>
    </location>
    <ligand>
        <name>L-glutamine</name>
        <dbReference type="ChEBI" id="CHEBI:58359"/>
    </ligand>
</feature>
<feature type="binding site" evidence="1">
    <location>
        <begin position="394"/>
        <end position="397"/>
    </location>
    <ligand>
        <name>L-glutamine</name>
        <dbReference type="ChEBI" id="CHEBI:58359"/>
    </ligand>
</feature>
<feature type="binding site" evidence="1">
    <location>
        <position position="416"/>
    </location>
    <ligand>
        <name>L-glutamine</name>
        <dbReference type="ChEBI" id="CHEBI:58359"/>
    </ligand>
</feature>
<feature type="binding site" evidence="1">
    <location>
        <position position="477"/>
    </location>
    <ligand>
        <name>L-glutamine</name>
        <dbReference type="ChEBI" id="CHEBI:58359"/>
    </ligand>
</feature>
<dbReference type="EC" id="6.3.4.2" evidence="1"/>
<dbReference type="EMBL" id="CP000854">
    <property type="protein sequence ID" value="ACC40955.1"/>
    <property type="molecule type" value="Genomic_DNA"/>
</dbReference>
<dbReference type="RefSeq" id="WP_012394244.1">
    <property type="nucleotide sequence ID" value="NC_010612.1"/>
</dbReference>
<dbReference type="SMR" id="B2HR69"/>
<dbReference type="STRING" id="216594.MMAR_2504"/>
<dbReference type="MEROPS" id="C26.964"/>
<dbReference type="KEGG" id="mmi:MMAR_2504"/>
<dbReference type="eggNOG" id="COG0504">
    <property type="taxonomic scope" value="Bacteria"/>
</dbReference>
<dbReference type="HOGENOM" id="CLU_011675_5_0_11"/>
<dbReference type="OrthoDB" id="9801107at2"/>
<dbReference type="UniPathway" id="UPA00159">
    <property type="reaction ID" value="UER00277"/>
</dbReference>
<dbReference type="Proteomes" id="UP000001190">
    <property type="component" value="Chromosome"/>
</dbReference>
<dbReference type="GO" id="GO:0005829">
    <property type="term" value="C:cytosol"/>
    <property type="evidence" value="ECO:0007669"/>
    <property type="project" value="TreeGrafter"/>
</dbReference>
<dbReference type="GO" id="GO:0005524">
    <property type="term" value="F:ATP binding"/>
    <property type="evidence" value="ECO:0007669"/>
    <property type="project" value="UniProtKB-KW"/>
</dbReference>
<dbReference type="GO" id="GO:0003883">
    <property type="term" value="F:CTP synthase activity"/>
    <property type="evidence" value="ECO:0007669"/>
    <property type="project" value="UniProtKB-UniRule"/>
</dbReference>
<dbReference type="GO" id="GO:0004359">
    <property type="term" value="F:glutaminase activity"/>
    <property type="evidence" value="ECO:0007669"/>
    <property type="project" value="RHEA"/>
</dbReference>
<dbReference type="GO" id="GO:0042802">
    <property type="term" value="F:identical protein binding"/>
    <property type="evidence" value="ECO:0007669"/>
    <property type="project" value="TreeGrafter"/>
</dbReference>
<dbReference type="GO" id="GO:0046872">
    <property type="term" value="F:metal ion binding"/>
    <property type="evidence" value="ECO:0007669"/>
    <property type="project" value="UniProtKB-KW"/>
</dbReference>
<dbReference type="GO" id="GO:0044210">
    <property type="term" value="P:'de novo' CTP biosynthetic process"/>
    <property type="evidence" value="ECO:0007669"/>
    <property type="project" value="UniProtKB-UniRule"/>
</dbReference>
<dbReference type="GO" id="GO:0019856">
    <property type="term" value="P:pyrimidine nucleobase biosynthetic process"/>
    <property type="evidence" value="ECO:0007669"/>
    <property type="project" value="TreeGrafter"/>
</dbReference>
<dbReference type="CDD" id="cd03113">
    <property type="entry name" value="CTPS_N"/>
    <property type="match status" value="1"/>
</dbReference>
<dbReference type="CDD" id="cd01746">
    <property type="entry name" value="GATase1_CTP_Synthase"/>
    <property type="match status" value="1"/>
</dbReference>
<dbReference type="FunFam" id="3.40.50.300:FF:000009">
    <property type="entry name" value="CTP synthase"/>
    <property type="match status" value="1"/>
</dbReference>
<dbReference type="FunFam" id="3.40.50.880:FF:000002">
    <property type="entry name" value="CTP synthase"/>
    <property type="match status" value="1"/>
</dbReference>
<dbReference type="Gene3D" id="3.40.50.880">
    <property type="match status" value="1"/>
</dbReference>
<dbReference type="Gene3D" id="3.40.50.300">
    <property type="entry name" value="P-loop containing nucleotide triphosphate hydrolases"/>
    <property type="match status" value="1"/>
</dbReference>
<dbReference type="HAMAP" id="MF_01227">
    <property type="entry name" value="PyrG"/>
    <property type="match status" value="1"/>
</dbReference>
<dbReference type="InterPro" id="IPR029062">
    <property type="entry name" value="Class_I_gatase-like"/>
</dbReference>
<dbReference type="InterPro" id="IPR004468">
    <property type="entry name" value="CTP_synthase"/>
</dbReference>
<dbReference type="InterPro" id="IPR017456">
    <property type="entry name" value="CTP_synthase_N"/>
</dbReference>
<dbReference type="InterPro" id="IPR017926">
    <property type="entry name" value="GATASE"/>
</dbReference>
<dbReference type="InterPro" id="IPR033828">
    <property type="entry name" value="GATase1_CTP_Synthase"/>
</dbReference>
<dbReference type="InterPro" id="IPR027417">
    <property type="entry name" value="P-loop_NTPase"/>
</dbReference>
<dbReference type="NCBIfam" id="NF003792">
    <property type="entry name" value="PRK05380.1"/>
    <property type="match status" value="1"/>
</dbReference>
<dbReference type="NCBIfam" id="TIGR00337">
    <property type="entry name" value="PyrG"/>
    <property type="match status" value="1"/>
</dbReference>
<dbReference type="PANTHER" id="PTHR11550">
    <property type="entry name" value="CTP SYNTHASE"/>
    <property type="match status" value="1"/>
</dbReference>
<dbReference type="PANTHER" id="PTHR11550:SF0">
    <property type="entry name" value="CTP SYNTHASE-RELATED"/>
    <property type="match status" value="1"/>
</dbReference>
<dbReference type="Pfam" id="PF06418">
    <property type="entry name" value="CTP_synth_N"/>
    <property type="match status" value="1"/>
</dbReference>
<dbReference type="Pfam" id="PF00117">
    <property type="entry name" value="GATase"/>
    <property type="match status" value="1"/>
</dbReference>
<dbReference type="SUPFAM" id="SSF52317">
    <property type="entry name" value="Class I glutamine amidotransferase-like"/>
    <property type="match status" value="1"/>
</dbReference>
<dbReference type="SUPFAM" id="SSF52540">
    <property type="entry name" value="P-loop containing nucleoside triphosphate hydrolases"/>
    <property type="match status" value="1"/>
</dbReference>
<dbReference type="PROSITE" id="PS51273">
    <property type="entry name" value="GATASE_TYPE_1"/>
    <property type="match status" value="1"/>
</dbReference>
<name>PYRG_MYCMM</name>
<keyword id="KW-0067">ATP-binding</keyword>
<keyword id="KW-0315">Glutamine amidotransferase</keyword>
<keyword id="KW-0436">Ligase</keyword>
<keyword id="KW-0460">Magnesium</keyword>
<keyword id="KW-0479">Metal-binding</keyword>
<keyword id="KW-0547">Nucleotide-binding</keyword>
<keyword id="KW-0665">Pyrimidine biosynthesis</keyword>
<keyword id="KW-1185">Reference proteome</keyword>
<comment type="function">
    <text evidence="1">Catalyzes the ATP-dependent amination of UTP to CTP with either L-glutamine or ammonia as the source of nitrogen. Regulates intracellular CTP levels through interactions with the four ribonucleotide triphosphates.</text>
</comment>
<comment type="catalytic activity">
    <reaction evidence="1">
        <text>UTP + L-glutamine + ATP + H2O = CTP + L-glutamate + ADP + phosphate + 2 H(+)</text>
        <dbReference type="Rhea" id="RHEA:26426"/>
        <dbReference type="ChEBI" id="CHEBI:15377"/>
        <dbReference type="ChEBI" id="CHEBI:15378"/>
        <dbReference type="ChEBI" id="CHEBI:29985"/>
        <dbReference type="ChEBI" id="CHEBI:30616"/>
        <dbReference type="ChEBI" id="CHEBI:37563"/>
        <dbReference type="ChEBI" id="CHEBI:43474"/>
        <dbReference type="ChEBI" id="CHEBI:46398"/>
        <dbReference type="ChEBI" id="CHEBI:58359"/>
        <dbReference type="ChEBI" id="CHEBI:456216"/>
        <dbReference type="EC" id="6.3.4.2"/>
    </reaction>
</comment>
<comment type="catalytic activity">
    <reaction evidence="1">
        <text>L-glutamine + H2O = L-glutamate + NH4(+)</text>
        <dbReference type="Rhea" id="RHEA:15889"/>
        <dbReference type="ChEBI" id="CHEBI:15377"/>
        <dbReference type="ChEBI" id="CHEBI:28938"/>
        <dbReference type="ChEBI" id="CHEBI:29985"/>
        <dbReference type="ChEBI" id="CHEBI:58359"/>
    </reaction>
</comment>
<comment type="catalytic activity">
    <reaction evidence="1">
        <text>UTP + NH4(+) + ATP = CTP + ADP + phosphate + 2 H(+)</text>
        <dbReference type="Rhea" id="RHEA:16597"/>
        <dbReference type="ChEBI" id="CHEBI:15378"/>
        <dbReference type="ChEBI" id="CHEBI:28938"/>
        <dbReference type="ChEBI" id="CHEBI:30616"/>
        <dbReference type="ChEBI" id="CHEBI:37563"/>
        <dbReference type="ChEBI" id="CHEBI:43474"/>
        <dbReference type="ChEBI" id="CHEBI:46398"/>
        <dbReference type="ChEBI" id="CHEBI:456216"/>
    </reaction>
</comment>
<comment type="activity regulation">
    <text evidence="1">Allosterically activated by GTP, when glutamine is the substrate; GTP has no effect on the reaction when ammonia is the substrate. The allosteric effector GTP functions by stabilizing the protein conformation that binds the tetrahedral intermediate(s) formed during glutamine hydrolysis. Inhibited by the product CTP, via allosteric rather than competitive inhibition.</text>
</comment>
<comment type="pathway">
    <text evidence="1">Pyrimidine metabolism; CTP biosynthesis via de novo pathway; CTP from UDP: step 2/2.</text>
</comment>
<comment type="subunit">
    <text evidence="1">Homotetramer.</text>
</comment>
<comment type="miscellaneous">
    <text evidence="1">CTPSs have evolved a hybrid strategy for distinguishing between UTP and CTP. The overlapping regions of the product feedback inhibitory and substrate sites recognize a common feature in both compounds, the triphosphate moiety. To differentiate isosteric substrate and product pyrimidine rings, an additional pocket far from the expected kinase/ligase catalytic site, specifically recognizes the cytosine and ribose portions of the product inhibitor.</text>
</comment>
<comment type="similarity">
    <text evidence="1">Belongs to the CTP synthase family.</text>
</comment>